<protein>
    <recommendedName>
        <fullName evidence="1">ATP synthase subunit b</fullName>
    </recommendedName>
    <alternativeName>
        <fullName evidence="1">ATP synthase F(0) sector subunit b</fullName>
    </alternativeName>
    <alternativeName>
        <fullName evidence="1">ATPase subunit I</fullName>
    </alternativeName>
    <alternativeName>
        <fullName evidence="1">F-type ATPase subunit b</fullName>
        <shortName evidence="1">F-ATPase subunit b</shortName>
    </alternativeName>
</protein>
<accession>Q4K3A5</accession>
<organism>
    <name type="scientific">Pseudomonas fluorescens (strain ATCC BAA-477 / NRRL B-23932 / Pf-5)</name>
    <dbReference type="NCBI Taxonomy" id="220664"/>
    <lineage>
        <taxon>Bacteria</taxon>
        <taxon>Pseudomonadati</taxon>
        <taxon>Pseudomonadota</taxon>
        <taxon>Gammaproteobacteria</taxon>
        <taxon>Pseudomonadales</taxon>
        <taxon>Pseudomonadaceae</taxon>
        <taxon>Pseudomonas</taxon>
    </lineage>
</organism>
<evidence type="ECO:0000255" key="1">
    <source>
        <dbReference type="HAMAP-Rule" id="MF_01398"/>
    </source>
</evidence>
<sequence>MNINATLIGQSVAFLIFVLFCMKFIWPPVIAALHERQKKIADGLDAASRAARDLELAQDKAGQQLREAKAQAAEIIEQAKKRGSQIVDEAREQARVEAERVKAQAQAEIEQELNGVKDALRAQLGSLAVNGAEKILGATIDQNAHAELVNKLAAEI</sequence>
<feature type="chain" id="PRO_0000368686" description="ATP synthase subunit b">
    <location>
        <begin position="1"/>
        <end position="156"/>
    </location>
</feature>
<feature type="transmembrane region" description="Helical" evidence="1">
    <location>
        <begin position="12"/>
        <end position="32"/>
    </location>
</feature>
<proteinExistence type="inferred from homology"/>
<name>ATPF_PSEF5</name>
<dbReference type="EMBL" id="CP000076">
    <property type="protein sequence ID" value="AAY95408.1"/>
    <property type="molecule type" value="Genomic_DNA"/>
</dbReference>
<dbReference type="RefSeq" id="WP_011064385.1">
    <property type="nucleotide sequence ID" value="NC_004129.6"/>
</dbReference>
<dbReference type="SMR" id="Q4K3A5"/>
<dbReference type="STRING" id="220664.PFL_6220"/>
<dbReference type="KEGG" id="pfl:PFL_6220"/>
<dbReference type="eggNOG" id="COG0711">
    <property type="taxonomic scope" value="Bacteria"/>
</dbReference>
<dbReference type="HOGENOM" id="CLU_079215_4_5_6"/>
<dbReference type="Proteomes" id="UP000008540">
    <property type="component" value="Chromosome"/>
</dbReference>
<dbReference type="GO" id="GO:0005886">
    <property type="term" value="C:plasma membrane"/>
    <property type="evidence" value="ECO:0007669"/>
    <property type="project" value="UniProtKB-SubCell"/>
</dbReference>
<dbReference type="GO" id="GO:0045259">
    <property type="term" value="C:proton-transporting ATP synthase complex"/>
    <property type="evidence" value="ECO:0007669"/>
    <property type="project" value="UniProtKB-KW"/>
</dbReference>
<dbReference type="GO" id="GO:0046933">
    <property type="term" value="F:proton-transporting ATP synthase activity, rotational mechanism"/>
    <property type="evidence" value="ECO:0007669"/>
    <property type="project" value="UniProtKB-UniRule"/>
</dbReference>
<dbReference type="GO" id="GO:0046961">
    <property type="term" value="F:proton-transporting ATPase activity, rotational mechanism"/>
    <property type="evidence" value="ECO:0007669"/>
    <property type="project" value="TreeGrafter"/>
</dbReference>
<dbReference type="CDD" id="cd06503">
    <property type="entry name" value="ATP-synt_Fo_b"/>
    <property type="match status" value="1"/>
</dbReference>
<dbReference type="FunFam" id="1.20.5.620:FF:000001">
    <property type="entry name" value="ATP synthase subunit b"/>
    <property type="match status" value="1"/>
</dbReference>
<dbReference type="Gene3D" id="1.20.5.620">
    <property type="entry name" value="F1F0 ATP synthase subunit B, membrane domain"/>
    <property type="match status" value="1"/>
</dbReference>
<dbReference type="HAMAP" id="MF_01398">
    <property type="entry name" value="ATP_synth_b_bprime"/>
    <property type="match status" value="1"/>
</dbReference>
<dbReference type="InterPro" id="IPR028987">
    <property type="entry name" value="ATP_synth_B-like_membr_sf"/>
</dbReference>
<dbReference type="InterPro" id="IPR002146">
    <property type="entry name" value="ATP_synth_b/b'su_bac/chlpt"/>
</dbReference>
<dbReference type="InterPro" id="IPR005864">
    <property type="entry name" value="ATP_synth_F0_bsu_bac"/>
</dbReference>
<dbReference type="InterPro" id="IPR050059">
    <property type="entry name" value="ATP_synthase_B_chain"/>
</dbReference>
<dbReference type="NCBIfam" id="TIGR01144">
    <property type="entry name" value="ATP_synt_b"/>
    <property type="match status" value="1"/>
</dbReference>
<dbReference type="NCBIfam" id="NF004411">
    <property type="entry name" value="PRK05759.1-2"/>
    <property type="match status" value="1"/>
</dbReference>
<dbReference type="NCBIfam" id="NF004413">
    <property type="entry name" value="PRK05759.1-4"/>
    <property type="match status" value="1"/>
</dbReference>
<dbReference type="PANTHER" id="PTHR33445:SF1">
    <property type="entry name" value="ATP SYNTHASE SUBUNIT B"/>
    <property type="match status" value="1"/>
</dbReference>
<dbReference type="PANTHER" id="PTHR33445">
    <property type="entry name" value="ATP SYNTHASE SUBUNIT B', CHLOROPLASTIC"/>
    <property type="match status" value="1"/>
</dbReference>
<dbReference type="Pfam" id="PF00430">
    <property type="entry name" value="ATP-synt_B"/>
    <property type="match status" value="1"/>
</dbReference>
<dbReference type="SUPFAM" id="SSF81573">
    <property type="entry name" value="F1F0 ATP synthase subunit B, membrane domain"/>
    <property type="match status" value="1"/>
</dbReference>
<reference key="1">
    <citation type="journal article" date="2005" name="Nat. Biotechnol.">
        <title>Complete genome sequence of the plant commensal Pseudomonas fluorescens Pf-5.</title>
        <authorList>
            <person name="Paulsen I.T."/>
            <person name="Press C.M."/>
            <person name="Ravel J."/>
            <person name="Kobayashi D.Y."/>
            <person name="Myers G.S.A."/>
            <person name="Mavrodi D.V."/>
            <person name="DeBoy R.T."/>
            <person name="Seshadri R."/>
            <person name="Ren Q."/>
            <person name="Madupu R."/>
            <person name="Dodson R.J."/>
            <person name="Durkin A.S."/>
            <person name="Brinkac L.M."/>
            <person name="Daugherty S.C."/>
            <person name="Sullivan S.A."/>
            <person name="Rosovitz M.J."/>
            <person name="Gwinn M.L."/>
            <person name="Zhou L."/>
            <person name="Schneider D.J."/>
            <person name="Cartinhour S.W."/>
            <person name="Nelson W.C."/>
            <person name="Weidman J."/>
            <person name="Watkins K."/>
            <person name="Tran K."/>
            <person name="Khouri H."/>
            <person name="Pierson E.A."/>
            <person name="Pierson L.S. III"/>
            <person name="Thomashow L.S."/>
            <person name="Loper J.E."/>
        </authorList>
    </citation>
    <scope>NUCLEOTIDE SEQUENCE [LARGE SCALE GENOMIC DNA]</scope>
    <source>
        <strain>ATCC BAA-477 / NRRL B-23932 / Pf-5</strain>
    </source>
</reference>
<keyword id="KW-0066">ATP synthesis</keyword>
<keyword id="KW-0997">Cell inner membrane</keyword>
<keyword id="KW-1003">Cell membrane</keyword>
<keyword id="KW-0138">CF(0)</keyword>
<keyword id="KW-0375">Hydrogen ion transport</keyword>
<keyword id="KW-0406">Ion transport</keyword>
<keyword id="KW-0472">Membrane</keyword>
<keyword id="KW-0812">Transmembrane</keyword>
<keyword id="KW-1133">Transmembrane helix</keyword>
<keyword id="KW-0813">Transport</keyword>
<gene>
    <name evidence="1" type="primary">atpF</name>
    <name type="ordered locus">PFL_6220</name>
</gene>
<comment type="function">
    <text evidence="1">F(1)F(0) ATP synthase produces ATP from ADP in the presence of a proton or sodium gradient. F-type ATPases consist of two structural domains, F(1) containing the extramembraneous catalytic core and F(0) containing the membrane proton channel, linked together by a central stalk and a peripheral stalk. During catalysis, ATP synthesis in the catalytic domain of F(1) is coupled via a rotary mechanism of the central stalk subunits to proton translocation.</text>
</comment>
<comment type="function">
    <text evidence="1">Component of the F(0) channel, it forms part of the peripheral stalk, linking F(1) to F(0).</text>
</comment>
<comment type="subunit">
    <text evidence="1">F-type ATPases have 2 components, F(1) - the catalytic core - and F(0) - the membrane proton channel. F(1) has five subunits: alpha(3), beta(3), gamma(1), delta(1), epsilon(1). F(0) has three main subunits: a(1), b(2) and c(10-14). The alpha and beta chains form an alternating ring which encloses part of the gamma chain. F(1) is attached to F(0) by a central stalk formed by the gamma and epsilon chains, while a peripheral stalk is formed by the delta and b chains.</text>
</comment>
<comment type="subcellular location">
    <subcellularLocation>
        <location evidence="1">Cell inner membrane</location>
        <topology evidence="1">Single-pass membrane protein</topology>
    </subcellularLocation>
</comment>
<comment type="similarity">
    <text evidence="1">Belongs to the ATPase B chain family.</text>
</comment>